<keyword id="KW-0903">Direct protein sequencing</keyword>
<keyword id="KW-0496">Mitochondrion</keyword>
<keyword id="KW-0808">Transferase</keyword>
<keyword id="KW-0809">Transit peptide</keyword>
<keyword id="KW-0816">Tricarboxylic acid cycle</keyword>
<name>CISY_FRAAN</name>
<gene>
    <name type="primary">MCSI</name>
</gene>
<reference evidence="4" key="1">
    <citation type="journal article" date="2004" name="Physiol. Plantarum">
        <title>Identification, cloning and expression analysis of strawberry (Fragaria x ananassa) mitochondrial citrate synthase and mitochondrial malate dehydrogenase.</title>
        <authorList>
            <person name="Iannetta P.P.M."/>
            <person name="Escobar N.M."/>
            <person name="Ross H.A."/>
            <person name="Souleyre E.J."/>
            <person name="Hancock R.D."/>
            <person name="Witte C.P."/>
            <person name="Davies H.V."/>
        </authorList>
    </citation>
    <scope>NUCLEOTIDE SEQUENCE</scope>
    <scope>PROTEIN SEQUENCE OF 29-46</scope>
    <source>
        <strain>cv. Elsanta</strain>
        <tissue>Fruit</tissue>
    </source>
</reference>
<sequence>MAFFRTVTKLRSRLGQPPSLRDSVRCLQTQASSDLDLHSQLKELIPEQQERLKKLKKEHGKVQLGTITVDMVIGGMRGMTGLLWETSLLDPDEGIRFRGLSIPECQKVLPGATPGGEPLPEGLLWLLLTGKVPSRSKNMHYPVNNGVVPKFQIMCSRPLMLCLLEHIPMTQFTTGVMALQVQSEFQKAYDKGIPKSRYWEPTYEDSLSLIAQLPVVASYVYRRIYKGGRMIPVDDSLDYGGNFSHLLGFDDHKMQELMRLYVTIHSDHEGGNVSAHTGHLVASALSDPFLSFAAALNGLAGPLHGLANQEVLLWIKSVVDECGENITKDQLKDYVWKTLNSGKVVPGFGHGVLRKTDPRYTCQREFALKHLPDDPLFRLVSKLYDVVPPILTELGKVKNPWPNVDAHSGVLLNHFGLTEARYFTVLFGVSRSIGIGSQLIWDRALGLPLERPKSVTMESLESFCKKAAS</sequence>
<comment type="catalytic activity">
    <reaction evidence="2">
        <text>oxaloacetate + acetyl-CoA + H2O = citrate + CoA + H(+)</text>
        <dbReference type="Rhea" id="RHEA:16845"/>
        <dbReference type="ChEBI" id="CHEBI:15377"/>
        <dbReference type="ChEBI" id="CHEBI:15378"/>
        <dbReference type="ChEBI" id="CHEBI:16452"/>
        <dbReference type="ChEBI" id="CHEBI:16947"/>
        <dbReference type="ChEBI" id="CHEBI:57287"/>
        <dbReference type="ChEBI" id="CHEBI:57288"/>
        <dbReference type="EC" id="2.3.3.16"/>
    </reaction>
</comment>
<comment type="pathway">
    <text>Carbohydrate metabolism; tricarboxylic acid cycle; isocitrate from oxaloacetate: step 1/2.</text>
</comment>
<comment type="subunit">
    <text evidence="1">Homodimer.</text>
</comment>
<comment type="subcellular location">
    <subcellularLocation>
        <location>Mitochondrion matrix</location>
    </subcellularLocation>
</comment>
<comment type="miscellaneous">
    <text evidence="1">Citrate synthase is found in nearly all cells capable of oxidative metabolism.</text>
</comment>
<comment type="similarity">
    <text evidence="4">Belongs to the citrate synthase family.</text>
</comment>
<organism evidence="4">
    <name type="scientific">Fragaria ananassa</name>
    <name type="common">Strawberry</name>
    <name type="synonym">Fragaria chiloensis x Fragaria virginiana</name>
    <dbReference type="NCBI Taxonomy" id="3747"/>
    <lineage>
        <taxon>Eukaryota</taxon>
        <taxon>Viridiplantae</taxon>
        <taxon>Streptophyta</taxon>
        <taxon>Embryophyta</taxon>
        <taxon>Tracheophyta</taxon>
        <taxon>Spermatophyta</taxon>
        <taxon>Magnoliopsida</taxon>
        <taxon>eudicotyledons</taxon>
        <taxon>Gunneridae</taxon>
        <taxon>Pentapetalae</taxon>
        <taxon>rosids</taxon>
        <taxon>fabids</taxon>
        <taxon>Rosales</taxon>
        <taxon>Rosaceae</taxon>
        <taxon>Rosoideae</taxon>
        <taxon>Potentilleae</taxon>
        <taxon>Fragariinae</taxon>
        <taxon>Fragaria</taxon>
    </lineage>
</organism>
<proteinExistence type="evidence at protein level"/>
<feature type="transit peptide" description="Mitochondrion" evidence="3">
    <location>
        <begin position="1"/>
        <end position="28"/>
    </location>
</feature>
<feature type="chain" id="PRO_0000005488" description="Citrate synthase, mitochondrial">
    <location>
        <begin position="29"/>
        <end position="469"/>
    </location>
</feature>
<feature type="active site" evidence="2">
    <location>
        <position position="304"/>
    </location>
</feature>
<feature type="active site" evidence="2">
    <location>
        <position position="350"/>
    </location>
</feature>
<feature type="active site" evidence="2">
    <location>
        <position position="405"/>
    </location>
</feature>
<protein>
    <recommendedName>
        <fullName>Citrate synthase, mitochondrial</fullName>
        <ecNumber>2.3.3.16</ecNumber>
    </recommendedName>
</protein>
<evidence type="ECO:0000250" key="1">
    <source>
        <dbReference type="UniProtKB" id="P00889"/>
    </source>
</evidence>
<evidence type="ECO:0000255" key="2">
    <source>
        <dbReference type="PROSITE-ProRule" id="PRU10117"/>
    </source>
</evidence>
<evidence type="ECO:0000269" key="3">
    <source>
    </source>
</evidence>
<evidence type="ECO:0000305" key="4"/>
<dbReference type="EC" id="2.3.3.16"/>
<dbReference type="SMR" id="P83372"/>
<dbReference type="BRENDA" id="2.3.3.16">
    <property type="organism ID" value="2320"/>
</dbReference>
<dbReference type="UniPathway" id="UPA00223">
    <property type="reaction ID" value="UER00717"/>
</dbReference>
<dbReference type="GO" id="GO:0005759">
    <property type="term" value="C:mitochondrial matrix"/>
    <property type="evidence" value="ECO:0007669"/>
    <property type="project" value="UniProtKB-SubCell"/>
</dbReference>
<dbReference type="GO" id="GO:0004108">
    <property type="term" value="F:citrate (Si)-synthase activity"/>
    <property type="evidence" value="ECO:0007669"/>
    <property type="project" value="InterPro"/>
</dbReference>
<dbReference type="GO" id="GO:0005975">
    <property type="term" value="P:carbohydrate metabolic process"/>
    <property type="evidence" value="ECO:0007669"/>
    <property type="project" value="TreeGrafter"/>
</dbReference>
<dbReference type="GO" id="GO:0006101">
    <property type="term" value="P:citrate metabolic process"/>
    <property type="evidence" value="ECO:0007669"/>
    <property type="project" value="InterPro"/>
</dbReference>
<dbReference type="GO" id="GO:0006099">
    <property type="term" value="P:tricarboxylic acid cycle"/>
    <property type="evidence" value="ECO:0007669"/>
    <property type="project" value="UniProtKB-UniPathway"/>
</dbReference>
<dbReference type="FunFam" id="1.10.230.10:FF:000001">
    <property type="entry name" value="Citrate synthase"/>
    <property type="match status" value="1"/>
</dbReference>
<dbReference type="Gene3D" id="1.10.580.10">
    <property type="entry name" value="Citrate Synthase, domain 1"/>
    <property type="match status" value="1"/>
</dbReference>
<dbReference type="Gene3D" id="1.10.230.10">
    <property type="entry name" value="Cytochrome P450-Terp, domain 2"/>
    <property type="match status" value="1"/>
</dbReference>
<dbReference type="InterPro" id="IPR016142">
    <property type="entry name" value="Citrate_synth-like_lrg_a-sub"/>
</dbReference>
<dbReference type="InterPro" id="IPR016143">
    <property type="entry name" value="Citrate_synth-like_sm_a-sub"/>
</dbReference>
<dbReference type="InterPro" id="IPR002020">
    <property type="entry name" value="Citrate_synthase"/>
</dbReference>
<dbReference type="InterPro" id="IPR019810">
    <property type="entry name" value="Citrate_synthase_AS"/>
</dbReference>
<dbReference type="InterPro" id="IPR010109">
    <property type="entry name" value="Citrate_synthase_euk"/>
</dbReference>
<dbReference type="InterPro" id="IPR036969">
    <property type="entry name" value="Citrate_synthase_sf"/>
</dbReference>
<dbReference type="NCBIfam" id="TIGR01793">
    <property type="entry name" value="cit_synth_euk"/>
    <property type="match status" value="1"/>
</dbReference>
<dbReference type="NCBIfam" id="NF007128">
    <property type="entry name" value="PRK09569.1"/>
    <property type="match status" value="1"/>
</dbReference>
<dbReference type="PANTHER" id="PTHR11739">
    <property type="entry name" value="CITRATE SYNTHASE"/>
    <property type="match status" value="1"/>
</dbReference>
<dbReference type="PANTHER" id="PTHR11739:SF8">
    <property type="entry name" value="CITRATE SYNTHASE, MITOCHONDRIAL"/>
    <property type="match status" value="1"/>
</dbReference>
<dbReference type="Pfam" id="PF00285">
    <property type="entry name" value="Citrate_synt"/>
    <property type="match status" value="1"/>
</dbReference>
<dbReference type="PRINTS" id="PR00143">
    <property type="entry name" value="CITRTSNTHASE"/>
</dbReference>
<dbReference type="SUPFAM" id="SSF48256">
    <property type="entry name" value="Citrate synthase"/>
    <property type="match status" value="1"/>
</dbReference>
<dbReference type="PROSITE" id="PS00480">
    <property type="entry name" value="CITRATE_SYNTHASE"/>
    <property type="match status" value="1"/>
</dbReference>
<accession>P83372</accession>